<name>RDRP_I34A1</name>
<reference key="1">
    <citation type="journal article" date="1982" name="Nucleic Acids Res.">
        <title>Nucleotide sequence of human influenza A/PR/8/34 segment 2.</title>
        <authorList>
            <person name="Winter G."/>
            <person name="Fields S."/>
        </authorList>
    </citation>
    <scope>NUCLEOTIDE SEQUENCE [GENOMIC RNA]</scope>
</reference>
<reference key="2">
    <citation type="journal article" date="2001" name="Philos. Trans. R. Soc. Lond., B, Biol. Sci.">
        <title>Plasmid-only rescue of influenza A virus vaccine candidates.</title>
        <authorList>
            <person name="Schickli J.H."/>
            <person name="Flandorfer A."/>
            <person name="Nakaya T."/>
            <person name="Martinez-Sobrido L."/>
            <person name="Garcia-Sastre A."/>
            <person name="Palese P."/>
        </authorList>
    </citation>
    <scope>NUCLEOTIDE SEQUENCE [GENOMIC RNA]</scope>
</reference>
<reference key="3">
    <citation type="journal article" date="2004" name="Virus Res.">
        <title>Efficient generation and growth of influenza virus A/PR/8/34 from eight cDNA fragments.</title>
        <authorList>
            <person name="de Wit E."/>
            <person name="Spronken M.I.J."/>
            <person name="Bestebroer T.M."/>
            <person name="Rimmelzwaan G.F."/>
            <person name="Osterhaus A.D.M.E."/>
            <person name="Fouchier R.A.M."/>
        </authorList>
    </citation>
    <scope>NUCLEOTIDE SEQUENCE [GENOMIC RNA]</scope>
    <scope>REVERSE GENETICS</scope>
</reference>
<reference key="4">
    <citation type="submission" date="2006-03" db="EMBL/GenBank/DDBJ databases">
        <title>The NIAID influenza genome sequencing project.</title>
        <authorList>
            <person name="Ghedin E."/>
            <person name="Spiro D."/>
            <person name="Miller N."/>
            <person name="Zaborsky J."/>
            <person name="Feldblyum T."/>
            <person name="Subbu V."/>
            <person name="Shumway M."/>
            <person name="Sparenborg J."/>
            <person name="Groveman L."/>
            <person name="Halpin R."/>
            <person name="Sitz J."/>
            <person name="Koo H."/>
            <person name="Salzberg S.L."/>
            <person name="Webster R.G."/>
            <person name="Hoffmann E."/>
            <person name="Krauss S."/>
            <person name="Naeve C."/>
            <person name="Bao Y."/>
            <person name="Bolotov P."/>
            <person name="Dernovoy D."/>
            <person name="Kiryutin B."/>
            <person name="Lipman D.J."/>
            <person name="Tatusova T."/>
        </authorList>
    </citation>
    <scope>NUCLEOTIDE SEQUENCE [GENOMIC RNA]</scope>
</reference>
<reference key="5">
    <citation type="journal article" date="1996" name="Arch. Virol.">
        <title>Influenza virus PB1 protein is the minimal and essential subunit of RNA polymerase.</title>
        <authorList>
            <person name="Kobayashi M."/>
            <person name="Toyoda T."/>
            <person name="Ishihama A."/>
        </authorList>
    </citation>
    <scope>FUNCTION</scope>
</reference>
<reference key="6">
    <citation type="journal article" date="2009" name="J. Gen. Virol.">
        <title>Influenza A virus proteins PB1 and NS1 are subject to functionally important phosphorylation by protein kinase C.</title>
        <authorList>
            <person name="Mahmoudian S."/>
            <person name="Auerochs S."/>
            <person name="Grone M."/>
            <person name="Marschall M."/>
        </authorList>
    </citation>
    <scope>PHOSPHORYLATION BY HOST PRKCA</scope>
    <source>
        <strain>A/WSN/33</strain>
    </source>
</reference>
<reference key="7">
    <citation type="journal article" date="2010" name="J. Virol.">
        <title>Nuclear import and assembly of influenza A virus RNA polymerase studied in live cells by fluorescence cross-correlation spectroscopy.</title>
        <authorList>
            <person name="Huet S."/>
            <person name="Avilov S.V."/>
            <person name="Ferbitz L."/>
            <person name="Daigle N."/>
            <person name="Cusack S."/>
            <person name="Ellenberg J."/>
        </authorList>
    </citation>
    <scope>SUBCELLULAR LOCATION</scope>
    <source>
        <strain>A/Victoria/3/75</strain>
    </source>
</reference>
<reference key="8">
    <citation type="journal article" date="2013" name="Acta Virol.">
        <title>The RNA polymerase of influenza a virus: mechanisms of viral transcription and replication.</title>
        <authorList>
            <person name="Fodor E."/>
        </authorList>
    </citation>
    <scope>REVIEW ON FUNCTION</scope>
</reference>
<reference key="9">
    <citation type="journal article" date="2017" name="Nat. Commun.">
        <title>Comparative influenza protein interactomes identify the role of plakophilin 2 in virus restriction.</title>
        <authorList>
            <person name="Wang L."/>
            <person name="Fu B."/>
            <person name="Li W."/>
            <person name="Patil G."/>
            <person name="Liu L."/>
            <person name="Dorf M.E."/>
            <person name="Li S."/>
        </authorList>
    </citation>
    <scope>INTERACTION WITH PB2 AND PA</scope>
    <scope>INTERACTION WITH HUMAN PKP2</scope>
</reference>
<reference key="10">
    <citation type="journal article" date="2008" name="Nature">
        <title>The structural basis for an essential subunit interaction in influenza virus RNA polymerase.</title>
        <authorList>
            <person name="Obayashi E."/>
            <person name="Yoshida H."/>
            <person name="Kawai F."/>
            <person name="Shibayama N."/>
            <person name="Kawaguchi A."/>
            <person name="Nagata K."/>
            <person name="Tame J.R."/>
            <person name="Park S.Y."/>
        </authorList>
    </citation>
    <scope>X-RAY CRYSTALLOGRAPHY (2.30 ANGSTROMS) OF 1-81</scope>
    <scope>INTERACTION WITH PA</scope>
</reference>
<reference key="11">
    <citation type="journal article" date="2009" name="EMBO J.">
        <title>Structural insight into the essential PB1-PB2 subunit contact of the influenza virus RNA polymerase.</title>
        <authorList>
            <person name="Sugiyama K."/>
            <person name="Obayashi E."/>
            <person name="Kawaguchi A."/>
            <person name="Suzuki Y."/>
            <person name="Tame J.R."/>
            <person name="Nagata K."/>
            <person name="Park S.Y."/>
        </authorList>
    </citation>
    <scope>X-RAY CRYSTALLOGRAPHY (1.70 ANGSTROMS) OF 678-757</scope>
    <scope>INTERACTION WITH PB2</scope>
</reference>
<evidence type="ECO:0000255" key="1">
    <source>
        <dbReference type="HAMAP-Rule" id="MF_04065"/>
    </source>
</evidence>
<evidence type="ECO:0000256" key="2">
    <source>
        <dbReference type="SAM" id="MobiDB-lite"/>
    </source>
</evidence>
<evidence type="ECO:0000269" key="3">
    <source>
    </source>
</evidence>
<evidence type="ECO:0000269" key="4">
    <source>
    </source>
</evidence>
<evidence type="ECO:0000269" key="5">
    <source>
    </source>
</evidence>
<evidence type="ECO:0000269" key="6">
    <source>
    </source>
</evidence>
<evidence type="ECO:0000269" key="7">
    <source>
    </source>
</evidence>
<evidence type="ECO:0000269" key="8">
    <source>
    </source>
</evidence>
<evidence type="ECO:0000305" key="9"/>
<evidence type="ECO:0000305" key="10">
    <source>
    </source>
</evidence>
<evidence type="ECO:0007829" key="11">
    <source>
        <dbReference type="PDB" id="2ZNL"/>
    </source>
</evidence>
<evidence type="ECO:0007829" key="12">
    <source>
        <dbReference type="PDB" id="3A1G"/>
    </source>
</evidence>
<evidence type="ECO:0007829" key="13">
    <source>
        <dbReference type="PDB" id="9IM6"/>
    </source>
</evidence>
<dbReference type="EC" id="2.7.7.48" evidence="1"/>
<dbReference type="EMBL" id="J02151">
    <property type="protein sequence ID" value="AAA43581.1"/>
    <property type="molecule type" value="Genomic_RNA"/>
</dbReference>
<dbReference type="EMBL" id="AF389116">
    <property type="protein sequence ID" value="AAM75156.1"/>
    <property type="molecule type" value="Genomic_RNA"/>
</dbReference>
<dbReference type="EMBL" id="CY009450">
    <property type="protein sequence ID" value="ABD77683.1"/>
    <property type="molecule type" value="Genomic_RNA"/>
</dbReference>
<dbReference type="EMBL" id="EF467819">
    <property type="protein sequence ID" value="ABO21706.1"/>
    <property type="molecule type" value="Genomic_RNA"/>
</dbReference>
<dbReference type="PIR" id="A93418">
    <property type="entry name" value="P1IV34"/>
</dbReference>
<dbReference type="RefSeq" id="NP_040985.1">
    <property type="nucleotide sequence ID" value="NC_002021.1"/>
</dbReference>
<dbReference type="PDB" id="2ZNL">
    <property type="method" value="X-ray"/>
    <property type="resolution" value="2.30 A"/>
    <property type="chains" value="B=1-81"/>
</dbReference>
<dbReference type="PDB" id="2ZTT">
    <property type="method" value="X-ray"/>
    <property type="resolution" value="2.10 A"/>
    <property type="chains" value="A/C=679-757"/>
</dbReference>
<dbReference type="PDB" id="3A1G">
    <property type="method" value="X-ray"/>
    <property type="resolution" value="1.70 A"/>
    <property type="chains" value="A/C=678-757"/>
</dbReference>
<dbReference type="PDB" id="9IM6">
    <property type="method" value="EM"/>
    <property type="resolution" value="3.21 A"/>
    <property type="chains" value="B=182-217"/>
</dbReference>
<dbReference type="PDBsum" id="2ZNL"/>
<dbReference type="PDBsum" id="2ZTT"/>
<dbReference type="PDBsum" id="3A1G"/>
<dbReference type="PDBsum" id="9IM6"/>
<dbReference type="EMDB" id="EMD-60685"/>
<dbReference type="SMR" id="P03431"/>
<dbReference type="DIP" id="DIP-56974N"/>
<dbReference type="IntAct" id="P03431">
    <property type="interactions" value="141"/>
</dbReference>
<dbReference type="MINT" id="P03431"/>
<dbReference type="BindingDB" id="P03431"/>
<dbReference type="ChEMBL" id="CHEMBL4523676"/>
<dbReference type="GeneID" id="956534"/>
<dbReference type="KEGG" id="vg:956534"/>
<dbReference type="OrthoDB" id="2346at10239"/>
<dbReference type="Reactome" id="R-HSA-168255">
    <property type="pathway name" value="Influenza Infection"/>
</dbReference>
<dbReference type="Reactome" id="R-HSA-168271">
    <property type="pathway name" value="Transport of Ribonucleoproteins into the Host Nucleus"/>
</dbReference>
<dbReference type="Reactome" id="R-HSA-168275">
    <property type="pathway name" value="Entry of Influenza Virion into Host Cell via Endocytosis"/>
</dbReference>
<dbReference type="Reactome" id="R-HSA-168288">
    <property type="pathway name" value="Fusion of the Influenza Virion to the Host Cell Endosome"/>
</dbReference>
<dbReference type="Reactome" id="R-HSA-168298">
    <property type="pathway name" value="Release"/>
</dbReference>
<dbReference type="Reactome" id="R-HSA-168302">
    <property type="pathway name" value="Budding"/>
</dbReference>
<dbReference type="Reactome" id="R-HSA-168303">
    <property type="pathway name" value="Packaging of Eight RNA Segments"/>
</dbReference>
<dbReference type="Reactome" id="R-HSA-168325">
    <property type="pathway name" value="Viral Messenger RNA Synthesis"/>
</dbReference>
<dbReference type="Reactome" id="R-HSA-168330">
    <property type="pathway name" value="Viral RNP Complexes in the Host Cell Nucleus"/>
</dbReference>
<dbReference type="Reactome" id="R-HSA-168333">
    <property type="pathway name" value="NEP/NS2 Interacts with the Cellular Export Machinery"/>
</dbReference>
<dbReference type="Reactome" id="R-HSA-168336">
    <property type="pathway name" value="Uncoating of the Influenza Virion"/>
</dbReference>
<dbReference type="Reactome" id="R-HSA-192814">
    <property type="pathway name" value="vRNA Synthesis"/>
</dbReference>
<dbReference type="Reactome" id="R-HSA-192823">
    <property type="pathway name" value="Viral mRNA Translation"/>
</dbReference>
<dbReference type="Reactome" id="R-HSA-192869">
    <property type="pathway name" value="cRNA Synthesis"/>
</dbReference>
<dbReference type="Reactome" id="R-HSA-192905">
    <property type="pathway name" value="vRNP Assembly"/>
</dbReference>
<dbReference type="EvolutionaryTrace" id="P03431"/>
<dbReference type="PRO" id="PR:P03431"/>
<dbReference type="Proteomes" id="UP000009255">
    <property type="component" value="Genome"/>
</dbReference>
<dbReference type="Proteomes" id="UP000116373">
    <property type="component" value="Genome"/>
</dbReference>
<dbReference type="Proteomes" id="UP000170967">
    <property type="component" value="Genome"/>
</dbReference>
<dbReference type="GO" id="GO:0005576">
    <property type="term" value="C:extracellular region"/>
    <property type="evidence" value="ECO:0000304"/>
    <property type="project" value="Reactome"/>
</dbReference>
<dbReference type="GO" id="GO:0030430">
    <property type="term" value="C:host cell cytoplasm"/>
    <property type="evidence" value="ECO:0007669"/>
    <property type="project" value="UniProtKB-SubCell"/>
</dbReference>
<dbReference type="GO" id="GO:0042025">
    <property type="term" value="C:host cell nucleus"/>
    <property type="evidence" value="ECO:0007669"/>
    <property type="project" value="UniProtKB-SubCell"/>
</dbReference>
<dbReference type="GO" id="GO:0000166">
    <property type="term" value="F:nucleotide binding"/>
    <property type="evidence" value="ECO:0007669"/>
    <property type="project" value="UniProtKB-UniRule"/>
</dbReference>
<dbReference type="GO" id="GO:0003723">
    <property type="term" value="F:RNA binding"/>
    <property type="evidence" value="ECO:0007669"/>
    <property type="project" value="InterPro"/>
</dbReference>
<dbReference type="GO" id="GO:0003968">
    <property type="term" value="F:RNA-directed RNA polymerase activity"/>
    <property type="evidence" value="ECO:0007669"/>
    <property type="project" value="UniProtKB-UniRule"/>
</dbReference>
<dbReference type="GO" id="GO:0006351">
    <property type="term" value="P:DNA-templated transcription"/>
    <property type="evidence" value="ECO:0007669"/>
    <property type="project" value="UniProtKB-UniRule"/>
</dbReference>
<dbReference type="GO" id="GO:0039657">
    <property type="term" value="P:symbiont-mediated suppression of host gene expression"/>
    <property type="evidence" value="ECO:0007669"/>
    <property type="project" value="UniProtKB-KW"/>
</dbReference>
<dbReference type="GO" id="GO:0039523">
    <property type="term" value="P:symbiont-mediated suppression of host mRNA transcription via inhibition of RNA polymerase II activity"/>
    <property type="evidence" value="ECO:0007669"/>
    <property type="project" value="UniProtKB-UniRule"/>
</dbReference>
<dbReference type="GO" id="GO:0039694">
    <property type="term" value="P:viral RNA genome replication"/>
    <property type="evidence" value="ECO:0007669"/>
    <property type="project" value="UniProtKB-UniRule"/>
</dbReference>
<dbReference type="GO" id="GO:0019083">
    <property type="term" value="P:viral transcription"/>
    <property type="evidence" value="ECO:0007669"/>
    <property type="project" value="UniProtKB-KW"/>
</dbReference>
<dbReference type="Gene3D" id="6.10.140.720">
    <property type="match status" value="1"/>
</dbReference>
<dbReference type="HAMAP" id="MF_04065">
    <property type="entry name" value="INFV_RDRP"/>
    <property type="match status" value="1"/>
</dbReference>
<dbReference type="InterPro" id="IPR007099">
    <property type="entry name" value="RNA-dir_pol_NSvirus"/>
</dbReference>
<dbReference type="InterPro" id="IPR001407">
    <property type="entry name" value="RNA_pol_PB1_influenza"/>
</dbReference>
<dbReference type="Pfam" id="PF00602">
    <property type="entry name" value="Flu_PB1"/>
    <property type="match status" value="1"/>
</dbReference>
<dbReference type="PIRSF" id="PIRSF000827">
    <property type="entry name" value="RdRPol_OMV"/>
    <property type="match status" value="1"/>
</dbReference>
<dbReference type="PROSITE" id="PS50525">
    <property type="entry name" value="RDRP_SSRNA_NEG_SEG"/>
    <property type="match status" value="1"/>
</dbReference>
<organismHost>
    <name type="scientific">Aves</name>
    <dbReference type="NCBI Taxonomy" id="8782"/>
</organismHost>
<organismHost>
    <name type="scientific">Homo sapiens</name>
    <name type="common">Human</name>
    <dbReference type="NCBI Taxonomy" id="9606"/>
</organismHost>
<organismHost>
    <name type="scientific">Sus scrofa</name>
    <name type="common">Pig</name>
    <dbReference type="NCBI Taxonomy" id="9823"/>
</organismHost>
<comment type="function">
    <text evidence="1 8 10">RNA-dependent RNA polymerase which is responsible for replication and transcription of virus RNA segments. The transcription of viral mRNAs occurs by a unique mechanism called cap-snatching. 5' methylated caps of cellular mRNAs are cleaved after 10-13 nucleotides by PA. In turn, these short capped RNAs are used as primers by PB1 for transcription of viral mRNAs. During virus replication, PB1 initiates RNA synthesis and copy vRNA into complementary RNA (cRNA) which in turn serves as a template for the production of more vRNAs.</text>
</comment>
<comment type="catalytic activity">
    <reaction evidence="1">
        <text>RNA(n) + a ribonucleoside 5'-triphosphate = RNA(n+1) + diphosphate</text>
        <dbReference type="Rhea" id="RHEA:21248"/>
        <dbReference type="Rhea" id="RHEA-COMP:14527"/>
        <dbReference type="Rhea" id="RHEA-COMP:17342"/>
        <dbReference type="ChEBI" id="CHEBI:33019"/>
        <dbReference type="ChEBI" id="CHEBI:61557"/>
        <dbReference type="ChEBI" id="CHEBI:140395"/>
        <dbReference type="EC" id="2.7.7.48"/>
    </reaction>
</comment>
<comment type="subunit">
    <text evidence="1 3 5 7">Influenza RNA polymerase is composed of three subunits: PB1, PB2 and PA. Interacts (via N-terminus) with PA (via C-terminus) (PubMed:18660801, PubMed:19461581, PubMed:28169297). Interacts (via C-terminus) with PB2 (via N-terminus); this interaction is essential for transcription initiation (PubMed:19461581, PubMed:28169297). Interacts (via C-terminus) with human PKP2 (via N-terminus); the interaction competitively inhibits the interaction between the RNA polymerase subunits PB1 and PB2 (PubMed:28169297).</text>
</comment>
<comment type="interaction">
    <interactant intactId="EBI-2547514">
        <id>P03431</id>
    </interactant>
    <interactant intactId="EBI-2547640">
        <id>P03466</id>
        <label>NP</label>
    </interactant>
    <organismsDiffer>false</organismsDiffer>
    <experiments>5</experiments>
</comment>
<comment type="interaction">
    <interactant intactId="EBI-2547514">
        <id>P03431</id>
    </interactant>
    <interactant intactId="EBI-2547616">
        <id>P03433</id>
        <label>PA</label>
    </interactant>
    <organismsDiffer>false</organismsDiffer>
    <experiments>6</experiments>
</comment>
<comment type="interaction">
    <interactant intactId="EBI-2547514">
        <id>P03431</id>
    </interactant>
    <interactant intactId="EBI-2547475">
        <id>P03428</id>
        <label>PB2</label>
    </interactant>
    <organismsDiffer>false</organismsDiffer>
    <experiments>3</experiments>
</comment>
<comment type="interaction">
    <interactant intactId="EBI-2547514">
        <id>P03431</id>
    </interactant>
    <interactant intactId="EBI-724839">
        <id>Q14318</id>
        <label>FKBP8</label>
    </interactant>
    <organismsDiffer>true</organismsDiffer>
    <experiments>5</experiments>
</comment>
<comment type="interaction">
    <interactant intactId="EBI-2547514">
        <id>P03431</id>
    </interactant>
    <interactant intactId="EBI-702235">
        <id>Q99959</id>
        <label>PKP2</label>
    </interactant>
    <organismsDiffer>true</organismsDiffer>
    <experiments>8</experiments>
</comment>
<comment type="subcellular location">
    <subcellularLocation>
        <location evidence="1 6">Host nucleus</location>
    </subcellularLocation>
    <subcellularLocation>
        <location evidence="1 6">Host cytoplasm</location>
    </subcellularLocation>
</comment>
<comment type="PTM">
    <text evidence="1 4">Phosphorylated by host PRKCA.</text>
</comment>
<comment type="similarity">
    <text evidence="1">Belongs to the influenza viruses polymerase PB1 family.</text>
</comment>
<sequence length="757" mass="86576">MDVNPTLLFLKVPAQNAISTTFPYTGDPPYSHGTGTGYTMDTVNRTHQYSEKGRWTTNTETGAPQLNPIDGPLPEDNEPSGYAQTDCVLEAMAFLEESHPGIFENSCIETMEVVQQTRVDKLTQGRQTYDWTLNRNQPAATALANTIEVFRSNGLTANESGRLIDFLKDVMESMKKEEMGITTHFQRKRRVRDNMTKKMITQRTIGKKKQRLNKRSYLIRALTLNTMTKDAERGKLKRRAIATPGMQIRGFVYFVETLARSICEKLEQSGLPVGGNEKKAKLANVVRKMMTNSQDTELSFTITGDNTKWNENQNPRMFLAMITYMTRNQPEWFRNVLSIAPIMFSNKMARLGKGYMFESKSMKLRTQIPAEMLASIDLKYFNDSTRKKIEKIRPLLIEGTASLSPGMMMGMFNMLSTVLGVSILNLGQKRYTKTTYWWDGLQSSDDFALIVNAPNHEGIQAGVDRFYRTCKLLGINMSKKKSYINRTGTFEFTSFFYRYGFVANFSMELPSFGVSGINESADMSIGVTVIKNNMINNDLGPATAQMALQLFIKDYRYTYRCHRGDTQIQTRRSFEIKKLWEQTRSKAGLLVSDGGPNLYNIRNLHIPEVCLKWELMDEDYQGRLCNPLNPFVSHKEIESMNNAVMMPAHGPAKNMEYDAVATTHSWIPKRNRSILNTSQRGVLEDEQMYQRCCNLFEKFFPSSSYRRPVGISSMVEAMVSRARIDARIDFESGRIKKEEFTEIMKICSTIEELRRQK</sequence>
<gene>
    <name evidence="1" type="primary">PB1</name>
</gene>
<feature type="chain" id="PRO_0000078763" description="RNA-directed RNA polymerase catalytic subunit">
    <location>
        <begin position="1"/>
        <end position="757"/>
    </location>
</feature>
<feature type="domain" description="RdRp catalytic" evidence="1">
    <location>
        <begin position="286"/>
        <end position="483"/>
    </location>
</feature>
<feature type="region of interest" description="Disordered" evidence="2">
    <location>
        <begin position="53"/>
        <end position="82"/>
    </location>
</feature>
<feature type="region of interest" description="Promoter-binding site" evidence="1">
    <location>
        <begin position="249"/>
        <end position="256"/>
    </location>
</feature>
<feature type="region of interest" description="Required for interaction with human PKP2" evidence="7">
    <location>
        <begin position="493"/>
        <end position="757"/>
    </location>
</feature>
<feature type="short sequence motif" description="Nuclear localization signal" evidence="1">
    <location>
        <begin position="187"/>
        <end position="195"/>
    </location>
</feature>
<feature type="short sequence motif" description="Nuclear localization signal" evidence="1">
    <location>
        <begin position="203"/>
        <end position="216"/>
    </location>
</feature>
<feature type="compositionally biased region" description="Polar residues" evidence="2">
    <location>
        <begin position="55"/>
        <end position="64"/>
    </location>
</feature>
<feature type="sequence conflict" description="In Ref. 1; AAA43581." evidence="9" ref="1">
    <original>G</original>
    <variation>A</variation>
    <location>
        <position position="53"/>
    </location>
</feature>
<feature type="sequence conflict" description="In Ref. 4; ABO21706 and 3; ABD77683." evidence="9" ref="4 3">
    <original>K</original>
    <variation>N</variation>
    <location>
        <position position="175"/>
    </location>
</feature>
<feature type="sequence conflict" description="In Ref. 4; ABO21706 and 3; ABD77683." evidence="9" ref="4 3">
    <original>I</original>
    <variation>M</variation>
    <location>
        <position position="205"/>
    </location>
</feature>
<feature type="sequence conflict" description="In Ref. 1; AAA43581." evidence="9" ref="1">
    <original>K</original>
    <variation>R</variation>
    <location>
        <position position="208"/>
    </location>
</feature>
<feature type="sequence conflict" description="In Ref. 1; AAA43581." evidence="9" ref="1">
    <original>F</original>
    <variation>L</variation>
    <location>
        <position position="300"/>
    </location>
</feature>
<feature type="sequence conflict" description="In Ref. 4; ABO21706 and 3; ABD77683." evidence="9" ref="4 3">
    <original>P</original>
    <variation>S</variation>
    <location>
        <position position="394"/>
    </location>
</feature>
<feature type="sequence conflict" description="In Ref. 1; AAA43581." evidence="9" ref="1">
    <original>L</original>
    <variation>H</variation>
    <location>
        <position position="473"/>
    </location>
</feature>
<feature type="sequence conflict" description="In Ref. 1; AAA43581." evidence="9" ref="1">
    <original>I</original>
    <variation>S</variation>
    <location>
        <position position="517"/>
    </location>
</feature>
<feature type="helix" evidence="11">
    <location>
        <begin position="5"/>
        <end position="10"/>
    </location>
</feature>
<feature type="strand" evidence="13">
    <location>
        <begin position="199"/>
        <end position="202"/>
    </location>
</feature>
<feature type="strand" evidence="13">
    <location>
        <begin position="206"/>
        <end position="208"/>
    </location>
</feature>
<feature type="helix" evidence="12">
    <location>
        <begin position="687"/>
        <end position="699"/>
    </location>
</feature>
<feature type="helix" evidence="12">
    <location>
        <begin position="714"/>
        <end position="731"/>
    </location>
</feature>
<feature type="helix" evidence="12">
    <location>
        <begin position="737"/>
        <end position="755"/>
    </location>
</feature>
<proteinExistence type="evidence at protein level"/>
<accession>P03431</accession>
<accession>A4GXH1</accession>
<accession>Q20N30</accession>
<accession>Q8JUU7</accession>
<organism>
    <name type="scientific">Influenza A virus (strain A/Puerto Rico/8/1934 H1N1)</name>
    <dbReference type="NCBI Taxonomy" id="211044"/>
    <lineage>
        <taxon>Viruses</taxon>
        <taxon>Riboviria</taxon>
        <taxon>Orthornavirae</taxon>
        <taxon>Negarnaviricota</taxon>
        <taxon>Polyploviricotina</taxon>
        <taxon>Insthoviricetes</taxon>
        <taxon>Articulavirales</taxon>
        <taxon>Orthomyxoviridae</taxon>
        <taxon>Alphainfluenzavirus</taxon>
        <taxon>Alphainfluenzavirus influenzae</taxon>
        <taxon>Influenza A virus</taxon>
    </lineage>
</organism>
<keyword id="KW-0002">3D-structure</keyword>
<keyword id="KW-1262">Eukaryotic host gene expression shutoff by virus</keyword>
<keyword id="KW-1191">Eukaryotic host transcription shutoff by virus</keyword>
<keyword id="KW-1035">Host cytoplasm</keyword>
<keyword id="KW-1190">Host gene expression shutoff by virus</keyword>
<keyword id="KW-1048">Host nucleus</keyword>
<keyword id="KW-0945">Host-virus interaction</keyword>
<keyword id="KW-1104">Inhibition of host RNA polymerase II by virus</keyword>
<keyword id="KW-0547">Nucleotide-binding</keyword>
<keyword id="KW-0548">Nucleotidyltransferase</keyword>
<keyword id="KW-0597">Phosphoprotein</keyword>
<keyword id="KW-1185">Reference proteome</keyword>
<keyword id="KW-0696">RNA-directed RNA polymerase</keyword>
<keyword id="KW-0808">Transferase</keyword>
<keyword id="KW-0693">Viral RNA replication</keyword>
<keyword id="KW-1195">Viral transcription</keyword>
<protein>
    <recommendedName>
        <fullName evidence="1">RNA-directed RNA polymerase catalytic subunit</fullName>
        <ecNumber evidence="1">2.7.7.48</ecNumber>
    </recommendedName>
    <alternativeName>
        <fullName evidence="1">Polymerase basic protein 1</fullName>
        <shortName evidence="1">PB1</shortName>
    </alternativeName>
    <alternativeName>
        <fullName evidence="1">RNA-directed RNA polymerase subunit P1</fullName>
    </alternativeName>
</protein>